<comment type="similarity">
    <text evidence="1">Belongs to the universal ribosomal protein uS9 family.</text>
</comment>
<protein>
    <recommendedName>
        <fullName evidence="1">Small ribosomal subunit protein uS9</fullName>
    </recommendedName>
    <alternativeName>
        <fullName evidence="2">30S ribosomal protein S9</fullName>
    </alternativeName>
</protein>
<sequence>MAENQYYGTGRRKSSAARVFIKPGNGKIVINQRSLEQYFGRETARMVVRQPLELVDMVEKLDLYITVKGGGISGQAGAIRHGITRALMEYDESLRGELRKAGFVTRDARQVERKKVGLRKARRRPQFSKR</sequence>
<gene>
    <name evidence="1" type="primary">rpsI</name>
    <name type="ordered locus">SARI_04280</name>
</gene>
<reference key="1">
    <citation type="submission" date="2007-11" db="EMBL/GenBank/DDBJ databases">
        <authorList>
            <consortium name="The Salmonella enterica serovar Arizonae Genome Sequencing Project"/>
            <person name="McClelland M."/>
            <person name="Sanderson E.K."/>
            <person name="Porwollik S."/>
            <person name="Spieth J."/>
            <person name="Clifton W.S."/>
            <person name="Fulton R."/>
            <person name="Chunyan W."/>
            <person name="Wollam A."/>
            <person name="Shah N."/>
            <person name="Pepin K."/>
            <person name="Bhonagiri V."/>
            <person name="Nash W."/>
            <person name="Johnson M."/>
            <person name="Thiruvilangam P."/>
            <person name="Wilson R."/>
        </authorList>
    </citation>
    <scope>NUCLEOTIDE SEQUENCE [LARGE SCALE GENOMIC DNA]</scope>
    <source>
        <strain>ATCC BAA-731 / CDC346-86 / RSK2980</strain>
    </source>
</reference>
<keyword id="KW-1185">Reference proteome</keyword>
<keyword id="KW-0687">Ribonucleoprotein</keyword>
<keyword id="KW-0689">Ribosomal protein</keyword>
<accession>A9MNY1</accession>
<name>RS9_SALAR</name>
<feature type="chain" id="PRO_1000081830" description="Small ribosomal subunit protein uS9">
    <location>
        <begin position="1"/>
        <end position="130"/>
    </location>
</feature>
<organism>
    <name type="scientific">Salmonella arizonae (strain ATCC BAA-731 / CDC346-86 / RSK2980)</name>
    <dbReference type="NCBI Taxonomy" id="41514"/>
    <lineage>
        <taxon>Bacteria</taxon>
        <taxon>Pseudomonadati</taxon>
        <taxon>Pseudomonadota</taxon>
        <taxon>Gammaproteobacteria</taxon>
        <taxon>Enterobacterales</taxon>
        <taxon>Enterobacteriaceae</taxon>
        <taxon>Salmonella</taxon>
    </lineage>
</organism>
<proteinExistence type="inferred from homology"/>
<evidence type="ECO:0000255" key="1">
    <source>
        <dbReference type="HAMAP-Rule" id="MF_00532"/>
    </source>
</evidence>
<evidence type="ECO:0000305" key="2"/>
<dbReference type="EMBL" id="CP000880">
    <property type="protein sequence ID" value="ABX24063.1"/>
    <property type="molecule type" value="Genomic_DNA"/>
</dbReference>
<dbReference type="SMR" id="A9MNY1"/>
<dbReference type="STRING" id="41514.SARI_04280"/>
<dbReference type="KEGG" id="ses:SARI_04280"/>
<dbReference type="HOGENOM" id="CLU_046483_2_1_6"/>
<dbReference type="Proteomes" id="UP000002084">
    <property type="component" value="Chromosome"/>
</dbReference>
<dbReference type="GO" id="GO:0022627">
    <property type="term" value="C:cytosolic small ribosomal subunit"/>
    <property type="evidence" value="ECO:0007669"/>
    <property type="project" value="TreeGrafter"/>
</dbReference>
<dbReference type="GO" id="GO:0003723">
    <property type="term" value="F:RNA binding"/>
    <property type="evidence" value="ECO:0007669"/>
    <property type="project" value="TreeGrafter"/>
</dbReference>
<dbReference type="GO" id="GO:0003735">
    <property type="term" value="F:structural constituent of ribosome"/>
    <property type="evidence" value="ECO:0007669"/>
    <property type="project" value="InterPro"/>
</dbReference>
<dbReference type="GO" id="GO:0006412">
    <property type="term" value="P:translation"/>
    <property type="evidence" value="ECO:0007669"/>
    <property type="project" value="UniProtKB-UniRule"/>
</dbReference>
<dbReference type="FunFam" id="3.30.230.10:FF:000001">
    <property type="entry name" value="30S ribosomal protein S9"/>
    <property type="match status" value="1"/>
</dbReference>
<dbReference type="Gene3D" id="3.30.230.10">
    <property type="match status" value="1"/>
</dbReference>
<dbReference type="HAMAP" id="MF_00532_B">
    <property type="entry name" value="Ribosomal_uS9_B"/>
    <property type="match status" value="1"/>
</dbReference>
<dbReference type="InterPro" id="IPR020568">
    <property type="entry name" value="Ribosomal_Su5_D2-typ_SF"/>
</dbReference>
<dbReference type="InterPro" id="IPR000754">
    <property type="entry name" value="Ribosomal_uS9"/>
</dbReference>
<dbReference type="InterPro" id="IPR023035">
    <property type="entry name" value="Ribosomal_uS9_bac/plastid"/>
</dbReference>
<dbReference type="InterPro" id="IPR020574">
    <property type="entry name" value="Ribosomal_uS9_CS"/>
</dbReference>
<dbReference type="InterPro" id="IPR014721">
    <property type="entry name" value="Ribsml_uS5_D2-typ_fold_subgr"/>
</dbReference>
<dbReference type="NCBIfam" id="NF001099">
    <property type="entry name" value="PRK00132.1"/>
    <property type="match status" value="1"/>
</dbReference>
<dbReference type="PANTHER" id="PTHR21569">
    <property type="entry name" value="RIBOSOMAL PROTEIN S9"/>
    <property type="match status" value="1"/>
</dbReference>
<dbReference type="PANTHER" id="PTHR21569:SF1">
    <property type="entry name" value="SMALL RIBOSOMAL SUBUNIT PROTEIN US9M"/>
    <property type="match status" value="1"/>
</dbReference>
<dbReference type="Pfam" id="PF00380">
    <property type="entry name" value="Ribosomal_S9"/>
    <property type="match status" value="1"/>
</dbReference>
<dbReference type="SUPFAM" id="SSF54211">
    <property type="entry name" value="Ribosomal protein S5 domain 2-like"/>
    <property type="match status" value="1"/>
</dbReference>
<dbReference type="PROSITE" id="PS00360">
    <property type="entry name" value="RIBOSOMAL_S9"/>
    <property type="match status" value="1"/>
</dbReference>